<reference key="1">
    <citation type="journal article" date="2003" name="Am. J. Phys. Anthropol.">
        <title>Evolution of a pigmentation gene, the melanocortin-1 receptor, in primates.</title>
        <authorList>
            <person name="Mundy N.I."/>
            <person name="Kelly J."/>
        </authorList>
    </citation>
    <scope>NUCLEOTIDE SEQUENCE [GENOMIC DNA]</scope>
    <source>
        <strain>Isolate 1</strain>
    </source>
</reference>
<dbReference type="EMBL" id="AY205116">
    <property type="protein sequence ID" value="AAP30990.1"/>
    <property type="molecule type" value="Genomic_DNA"/>
</dbReference>
<dbReference type="SMR" id="Q864I1"/>
<dbReference type="GlyCosmos" id="Q864I1">
    <property type="glycosylation" value="1 site, No reported glycans"/>
</dbReference>
<dbReference type="GO" id="GO:0005886">
    <property type="term" value="C:plasma membrane"/>
    <property type="evidence" value="ECO:0000250"/>
    <property type="project" value="UniProtKB"/>
</dbReference>
<dbReference type="GO" id="GO:0004980">
    <property type="term" value="F:melanocyte-stimulating hormone receptor activity"/>
    <property type="evidence" value="ECO:0007669"/>
    <property type="project" value="InterPro"/>
</dbReference>
<dbReference type="GO" id="GO:0007189">
    <property type="term" value="P:adenylate cyclase-activating G protein-coupled receptor signaling pathway"/>
    <property type="evidence" value="ECO:0007669"/>
    <property type="project" value="UniProtKB-ARBA"/>
</dbReference>
<dbReference type="FunFam" id="1.20.1070.10:FF:000211">
    <property type="entry name" value="Melanocyte-stimulating hormone receptor"/>
    <property type="match status" value="1"/>
</dbReference>
<dbReference type="Gene3D" id="1.20.1070.10">
    <property type="entry name" value="Rhodopsin 7-helix transmembrane proteins"/>
    <property type="match status" value="1"/>
</dbReference>
<dbReference type="InterPro" id="IPR000276">
    <property type="entry name" value="GPCR_Rhodpsn"/>
</dbReference>
<dbReference type="InterPro" id="IPR017452">
    <property type="entry name" value="GPCR_Rhodpsn_7TM"/>
</dbReference>
<dbReference type="InterPro" id="IPR001671">
    <property type="entry name" value="Melcrt_ACTH_rcpt"/>
</dbReference>
<dbReference type="InterPro" id="IPR000761">
    <property type="entry name" value="MSH_rcpt"/>
</dbReference>
<dbReference type="PANTHER" id="PTHR22750">
    <property type="entry name" value="G-PROTEIN COUPLED RECEPTOR"/>
    <property type="match status" value="1"/>
</dbReference>
<dbReference type="Pfam" id="PF00001">
    <property type="entry name" value="7tm_1"/>
    <property type="match status" value="1"/>
</dbReference>
<dbReference type="PRINTS" id="PR00237">
    <property type="entry name" value="GPCRRHODOPSN"/>
</dbReference>
<dbReference type="PRINTS" id="PR00534">
    <property type="entry name" value="MCRFAMILY"/>
</dbReference>
<dbReference type="PRINTS" id="PR00536">
    <property type="entry name" value="MELNOCYTESHR"/>
</dbReference>
<dbReference type="SMART" id="SM01381">
    <property type="entry name" value="7TM_GPCR_Srsx"/>
    <property type="match status" value="1"/>
</dbReference>
<dbReference type="SUPFAM" id="SSF81321">
    <property type="entry name" value="Family A G protein-coupled receptor-like"/>
    <property type="match status" value="1"/>
</dbReference>
<dbReference type="PROSITE" id="PS00237">
    <property type="entry name" value="G_PROTEIN_RECEP_F1_1"/>
    <property type="match status" value="1"/>
</dbReference>
<dbReference type="PROSITE" id="PS50262">
    <property type="entry name" value="G_PROTEIN_RECEP_F1_2"/>
    <property type="match status" value="1"/>
</dbReference>
<comment type="function">
    <text evidence="1">Receptor for MSH (alpha, beta and gamma) and ACTH. The activity of this receptor is mediated by G proteins which activate adenylate cyclase. Mediates melanogenesis, the production of eumelanin (black/brown) and phaeomelanin (red/yellow), via regulation of cAMP signaling in melanocytes.</text>
</comment>
<comment type="subunit">
    <text evidence="1">Interacts with MGRN1, but does not undergo MGRN1-mediated ubiquitination; this interaction competes with GNAS-binding and thus inhibits agonist-induced cAMP production. Interacts with OPN3; the interaction results in a decrease in MC1R-mediated cAMP signaling and ultimately a decrease in melanin production in melanocytes.</text>
</comment>
<comment type="subcellular location">
    <subcellularLocation>
        <location evidence="1">Cell membrane</location>
        <topology evidence="2">Multi-pass membrane protein</topology>
    </subcellularLocation>
</comment>
<comment type="similarity">
    <text evidence="3">Belongs to the G-protein coupled receptor 1 family.</text>
</comment>
<name>MSHR_LEOCY</name>
<proteinExistence type="inferred from homology"/>
<keyword id="KW-1003">Cell membrane</keyword>
<keyword id="KW-0297">G-protein coupled receptor</keyword>
<keyword id="KW-0325">Glycoprotein</keyword>
<keyword id="KW-0472">Membrane</keyword>
<keyword id="KW-0675">Receptor</keyword>
<keyword id="KW-0807">Transducer</keyword>
<keyword id="KW-0812">Transmembrane</keyword>
<keyword id="KW-1133">Transmembrane helix</keyword>
<protein>
    <recommendedName>
        <fullName>Melanocyte-stimulating hormone receptor</fullName>
        <shortName>MSH-R</shortName>
    </recommendedName>
    <alternativeName>
        <fullName>Melanocortin receptor 1</fullName>
        <shortName>MC1-R</shortName>
    </alternativeName>
</protein>
<gene>
    <name type="primary">MC1R</name>
</gene>
<feature type="chain" id="PRO_0000069824" description="Melanocyte-stimulating hormone receptor">
    <location>
        <begin position="1"/>
        <end position="310"/>
    </location>
</feature>
<feature type="topological domain" description="Extracellular" evidence="2">
    <location>
        <begin position="1"/>
        <end position="37"/>
    </location>
</feature>
<feature type="transmembrane region" description="Helical; Name=1" evidence="2">
    <location>
        <begin position="38"/>
        <end position="63"/>
    </location>
</feature>
<feature type="topological domain" description="Cytoplasmic" evidence="2">
    <location>
        <begin position="64"/>
        <end position="72"/>
    </location>
</feature>
<feature type="transmembrane region" description="Helical; Name=2" evidence="2">
    <location>
        <begin position="73"/>
        <end position="93"/>
    </location>
</feature>
<feature type="topological domain" description="Extracellular" evidence="2">
    <location>
        <begin position="94"/>
        <end position="110"/>
    </location>
</feature>
<feature type="transmembrane region" description="Helical; Name=3" evidence="2">
    <location>
        <begin position="111"/>
        <end position="132"/>
    </location>
</feature>
<feature type="topological domain" description="Cytoplasmic" evidence="2">
    <location>
        <begin position="133"/>
        <end position="155"/>
    </location>
</feature>
<feature type="transmembrane region" description="Helical; Name=4" evidence="2">
    <location>
        <begin position="156"/>
        <end position="175"/>
    </location>
</feature>
<feature type="topological domain" description="Extracellular" evidence="2">
    <location>
        <begin position="176"/>
        <end position="183"/>
    </location>
</feature>
<feature type="transmembrane region" description="Helical; Name=5" evidence="2">
    <location>
        <begin position="184"/>
        <end position="203"/>
    </location>
</feature>
<feature type="topological domain" description="Cytoplasmic" evidence="2">
    <location>
        <begin position="204"/>
        <end position="232"/>
    </location>
</feature>
<feature type="transmembrane region" description="Helical; Name=6" evidence="2">
    <location>
        <begin position="233"/>
        <end position="258"/>
    </location>
</feature>
<feature type="topological domain" description="Extracellular" evidence="2">
    <location>
        <begin position="259"/>
        <end position="271"/>
    </location>
</feature>
<feature type="transmembrane region" description="Helical; Name=7" evidence="2">
    <location>
        <begin position="272"/>
        <end position="292"/>
    </location>
</feature>
<feature type="topological domain" description="Cytoplasmic" evidence="2">
    <location>
        <begin position="293"/>
        <end position="310"/>
    </location>
</feature>
<feature type="glycosylation site" description="N-linked (GlcNAc...) asparagine" evidence="2">
    <location>
        <position position="29"/>
    </location>
</feature>
<organism>
    <name type="scientific">Leontopithecus chrysomelas</name>
    <name type="common">Golden-headed lion tamarin</name>
    <dbReference type="NCBI Taxonomy" id="57374"/>
    <lineage>
        <taxon>Eukaryota</taxon>
        <taxon>Metazoa</taxon>
        <taxon>Chordata</taxon>
        <taxon>Craniata</taxon>
        <taxon>Vertebrata</taxon>
        <taxon>Euteleostomi</taxon>
        <taxon>Mammalia</taxon>
        <taxon>Eutheria</taxon>
        <taxon>Euarchontoglires</taxon>
        <taxon>Primates</taxon>
        <taxon>Haplorrhini</taxon>
        <taxon>Platyrrhini</taxon>
        <taxon>Cebidae</taxon>
        <taxon>Callitrichinae</taxon>
        <taxon>Leontopithecus</taxon>
    </lineage>
</organism>
<accession>Q864I1</accession>
<sequence>MPMQGAQRKLLGSLNSTPTATSNLGLAANRTGAPCLELPIPDGLFLSLGLVSLVENVLVVAAIAKNRNLHSSMYCFICCLALSDLLVSGSNMLEAGVLATRASVVQQLHNTIDVLTCSSMLCSLCFLGAIAVDRYISIFYALRYHSIMTLPRAQRAVAAIWVASVLSSTLFITYYDHAAVLLCLVVFFLAMLVLMAVLYVHMLAWACQHAQGIIRLHKRQPPAHKGFGLRGAATLTILLGIFFLCWGPFFLRLTLVVFCPQHLTCNCIFKNFKVFLTLIICNTIIDPLIYAFRSQELRRTLKEVLGRGRW</sequence>
<evidence type="ECO:0000250" key="1">
    <source>
        <dbReference type="UniProtKB" id="Q01726"/>
    </source>
</evidence>
<evidence type="ECO:0000255" key="2"/>
<evidence type="ECO:0000255" key="3">
    <source>
        <dbReference type="PROSITE-ProRule" id="PRU00521"/>
    </source>
</evidence>